<feature type="chain" id="PRO_1000195477" description="6,7-dimethyl-8-ribityllumazine synthase">
    <location>
        <begin position="1"/>
        <end position="155"/>
    </location>
</feature>
<feature type="active site" description="Proton donor" evidence="1">
    <location>
        <position position="89"/>
    </location>
</feature>
<feature type="binding site" evidence="1">
    <location>
        <position position="23"/>
    </location>
    <ligand>
        <name>5-amino-6-(D-ribitylamino)uracil</name>
        <dbReference type="ChEBI" id="CHEBI:15934"/>
    </ligand>
</feature>
<feature type="binding site" evidence="1">
    <location>
        <begin position="57"/>
        <end position="59"/>
    </location>
    <ligand>
        <name>5-amino-6-(D-ribitylamino)uracil</name>
        <dbReference type="ChEBI" id="CHEBI:15934"/>
    </ligand>
</feature>
<feature type="binding site" evidence="1">
    <location>
        <begin position="81"/>
        <end position="83"/>
    </location>
    <ligand>
        <name>5-amino-6-(D-ribitylamino)uracil</name>
        <dbReference type="ChEBI" id="CHEBI:15934"/>
    </ligand>
</feature>
<feature type="binding site" evidence="1">
    <location>
        <begin position="86"/>
        <end position="87"/>
    </location>
    <ligand>
        <name>(2S)-2-hydroxy-3-oxobutyl phosphate</name>
        <dbReference type="ChEBI" id="CHEBI:58830"/>
    </ligand>
</feature>
<feature type="binding site" evidence="1">
    <location>
        <position position="114"/>
    </location>
    <ligand>
        <name>5-amino-6-(D-ribitylamino)uracil</name>
        <dbReference type="ChEBI" id="CHEBI:15934"/>
    </ligand>
</feature>
<feature type="binding site" evidence="1">
    <location>
        <position position="128"/>
    </location>
    <ligand>
        <name>(2S)-2-hydroxy-3-oxobutyl phosphate</name>
        <dbReference type="ChEBI" id="CHEBI:58830"/>
    </ligand>
</feature>
<organism>
    <name type="scientific">Desulfatibacillum aliphaticivorans</name>
    <dbReference type="NCBI Taxonomy" id="218208"/>
    <lineage>
        <taxon>Bacteria</taxon>
        <taxon>Pseudomonadati</taxon>
        <taxon>Thermodesulfobacteriota</taxon>
        <taxon>Desulfobacteria</taxon>
        <taxon>Desulfobacterales</taxon>
        <taxon>Desulfatibacillaceae</taxon>
        <taxon>Desulfatibacillum</taxon>
    </lineage>
</organism>
<name>RISB_DESAL</name>
<proteinExistence type="inferred from homology"/>
<gene>
    <name evidence="1" type="primary">ribH</name>
    <name type="ordered locus">Dalk_3315</name>
</gene>
<comment type="function">
    <text evidence="1">Catalyzes the formation of 6,7-dimethyl-8-ribityllumazine by condensation of 5-amino-6-(D-ribitylamino)uracil with 3,4-dihydroxy-2-butanone 4-phosphate. This is the penultimate step in the biosynthesis of riboflavin.</text>
</comment>
<comment type="catalytic activity">
    <reaction evidence="1">
        <text>(2S)-2-hydroxy-3-oxobutyl phosphate + 5-amino-6-(D-ribitylamino)uracil = 6,7-dimethyl-8-(1-D-ribityl)lumazine + phosphate + 2 H2O + H(+)</text>
        <dbReference type="Rhea" id="RHEA:26152"/>
        <dbReference type="ChEBI" id="CHEBI:15377"/>
        <dbReference type="ChEBI" id="CHEBI:15378"/>
        <dbReference type="ChEBI" id="CHEBI:15934"/>
        <dbReference type="ChEBI" id="CHEBI:43474"/>
        <dbReference type="ChEBI" id="CHEBI:58201"/>
        <dbReference type="ChEBI" id="CHEBI:58830"/>
        <dbReference type="EC" id="2.5.1.78"/>
    </reaction>
</comment>
<comment type="pathway">
    <text evidence="1">Cofactor biosynthesis; riboflavin biosynthesis; riboflavin from 2-hydroxy-3-oxobutyl phosphate and 5-amino-6-(D-ribitylamino)uracil: step 1/2.</text>
</comment>
<comment type="similarity">
    <text evidence="1">Belongs to the DMRL synthase family.</text>
</comment>
<reference key="1">
    <citation type="journal article" date="2012" name="Environ. Microbiol.">
        <title>The genome sequence of Desulfatibacillum alkenivorans AK-01: a blueprint for anaerobic alkane oxidation.</title>
        <authorList>
            <person name="Callaghan A.V."/>
            <person name="Morris B.E."/>
            <person name="Pereira I.A."/>
            <person name="McInerney M.J."/>
            <person name="Austin R.N."/>
            <person name="Groves J.T."/>
            <person name="Kukor J.J."/>
            <person name="Suflita J.M."/>
            <person name="Young L.Y."/>
            <person name="Zylstra G.J."/>
            <person name="Wawrik B."/>
        </authorList>
    </citation>
    <scope>NUCLEOTIDE SEQUENCE [LARGE SCALE GENOMIC DNA]</scope>
    <source>
        <strain>AK-01</strain>
    </source>
</reference>
<keyword id="KW-1185">Reference proteome</keyword>
<keyword id="KW-0686">Riboflavin biosynthesis</keyword>
<keyword id="KW-0808">Transferase</keyword>
<sequence length="155" mass="16373">MPRMIEGTLSAEGKRFGIIVARFNDFISDRLLGGALDALMRSGAADENIEVAKVPGAFEIPLIADKMAKSGKYDALICLGAVIRGSTPHFDYVCAEASKGIAHVSLGAGIPVMFGILTTDTIEQAIERAGTKAGNKGWDVAMGAIEMVNLAEQFK</sequence>
<accession>B8FJ77</accession>
<dbReference type="EC" id="2.5.1.78" evidence="1"/>
<dbReference type="EMBL" id="CP001322">
    <property type="protein sequence ID" value="ACL05004.1"/>
    <property type="molecule type" value="Genomic_DNA"/>
</dbReference>
<dbReference type="SMR" id="B8FJ77"/>
<dbReference type="KEGG" id="dal:Dalk_3315"/>
<dbReference type="eggNOG" id="COG0054">
    <property type="taxonomic scope" value="Bacteria"/>
</dbReference>
<dbReference type="HOGENOM" id="CLU_089358_1_1_7"/>
<dbReference type="UniPathway" id="UPA00275">
    <property type="reaction ID" value="UER00404"/>
</dbReference>
<dbReference type="Proteomes" id="UP000000739">
    <property type="component" value="Chromosome"/>
</dbReference>
<dbReference type="GO" id="GO:0005829">
    <property type="term" value="C:cytosol"/>
    <property type="evidence" value="ECO:0007669"/>
    <property type="project" value="TreeGrafter"/>
</dbReference>
<dbReference type="GO" id="GO:0009349">
    <property type="term" value="C:riboflavin synthase complex"/>
    <property type="evidence" value="ECO:0007669"/>
    <property type="project" value="InterPro"/>
</dbReference>
<dbReference type="GO" id="GO:0000906">
    <property type="term" value="F:6,7-dimethyl-8-ribityllumazine synthase activity"/>
    <property type="evidence" value="ECO:0007669"/>
    <property type="project" value="UniProtKB-UniRule"/>
</dbReference>
<dbReference type="GO" id="GO:0009231">
    <property type="term" value="P:riboflavin biosynthetic process"/>
    <property type="evidence" value="ECO:0007669"/>
    <property type="project" value="UniProtKB-UniRule"/>
</dbReference>
<dbReference type="CDD" id="cd09209">
    <property type="entry name" value="Lumazine_synthase-I"/>
    <property type="match status" value="1"/>
</dbReference>
<dbReference type="FunFam" id="3.40.50.960:FF:000001">
    <property type="entry name" value="6,7-dimethyl-8-ribityllumazine synthase"/>
    <property type="match status" value="1"/>
</dbReference>
<dbReference type="Gene3D" id="3.40.50.960">
    <property type="entry name" value="Lumazine/riboflavin synthase"/>
    <property type="match status" value="1"/>
</dbReference>
<dbReference type="HAMAP" id="MF_00178">
    <property type="entry name" value="Lumazine_synth"/>
    <property type="match status" value="1"/>
</dbReference>
<dbReference type="InterPro" id="IPR034964">
    <property type="entry name" value="LS"/>
</dbReference>
<dbReference type="InterPro" id="IPR002180">
    <property type="entry name" value="LS/RS"/>
</dbReference>
<dbReference type="InterPro" id="IPR036467">
    <property type="entry name" value="LS/RS_sf"/>
</dbReference>
<dbReference type="NCBIfam" id="TIGR00114">
    <property type="entry name" value="lumazine-synth"/>
    <property type="match status" value="1"/>
</dbReference>
<dbReference type="NCBIfam" id="NF000812">
    <property type="entry name" value="PRK00061.1-4"/>
    <property type="match status" value="1"/>
</dbReference>
<dbReference type="PANTHER" id="PTHR21058:SF0">
    <property type="entry name" value="6,7-DIMETHYL-8-RIBITYLLUMAZINE SYNTHASE"/>
    <property type="match status" value="1"/>
</dbReference>
<dbReference type="PANTHER" id="PTHR21058">
    <property type="entry name" value="6,7-DIMETHYL-8-RIBITYLLUMAZINE SYNTHASE DMRL SYNTHASE LUMAZINE SYNTHASE"/>
    <property type="match status" value="1"/>
</dbReference>
<dbReference type="Pfam" id="PF00885">
    <property type="entry name" value="DMRL_synthase"/>
    <property type="match status" value="1"/>
</dbReference>
<dbReference type="SUPFAM" id="SSF52121">
    <property type="entry name" value="Lumazine synthase"/>
    <property type="match status" value="1"/>
</dbReference>
<evidence type="ECO:0000255" key="1">
    <source>
        <dbReference type="HAMAP-Rule" id="MF_00178"/>
    </source>
</evidence>
<protein>
    <recommendedName>
        <fullName evidence="1">6,7-dimethyl-8-ribityllumazine synthase</fullName>
        <shortName evidence="1">DMRL synthase</shortName>
        <shortName evidence="1">LS</shortName>
        <shortName evidence="1">Lumazine synthase</shortName>
        <ecNumber evidence="1">2.5.1.78</ecNumber>
    </recommendedName>
</protein>